<evidence type="ECO:0000255" key="1">
    <source>
        <dbReference type="HAMAP-Rule" id="MF_00412"/>
    </source>
</evidence>
<keyword id="KW-0028">Amino-acid biosynthesis</keyword>
<keyword id="KW-0963">Cytoplasm</keyword>
<keyword id="KW-0521">NADP</keyword>
<keyword id="KW-0560">Oxidoreductase</keyword>
<keyword id="KW-0641">Proline biosynthesis</keyword>
<keyword id="KW-1185">Reference proteome</keyword>
<reference key="1">
    <citation type="journal article" date="2001" name="Genome Res.">
        <title>The complete genome sequence of the lactic acid bacterium Lactococcus lactis ssp. lactis IL1403.</title>
        <authorList>
            <person name="Bolotin A."/>
            <person name="Wincker P."/>
            <person name="Mauger S."/>
            <person name="Jaillon O."/>
            <person name="Malarme K."/>
            <person name="Weissenbach J."/>
            <person name="Ehrlich S.D."/>
            <person name="Sorokin A."/>
        </authorList>
    </citation>
    <scope>NUCLEOTIDE SEQUENCE [LARGE SCALE GENOMIC DNA]</scope>
    <source>
        <strain>IL1403</strain>
    </source>
</reference>
<dbReference type="EC" id="1.2.1.41" evidence="1"/>
<dbReference type="EMBL" id="AE005176">
    <property type="protein sequence ID" value="AAK05706.1"/>
    <property type="molecule type" value="Genomic_DNA"/>
</dbReference>
<dbReference type="PIR" id="H86825">
    <property type="entry name" value="H86825"/>
</dbReference>
<dbReference type="RefSeq" id="NP_267764.1">
    <property type="nucleotide sequence ID" value="NC_002662.1"/>
</dbReference>
<dbReference type="RefSeq" id="WP_010906056.1">
    <property type="nucleotide sequence ID" value="NC_002662.1"/>
</dbReference>
<dbReference type="SMR" id="Q9CF73"/>
<dbReference type="PaxDb" id="272623-L0116"/>
<dbReference type="EnsemblBacteria" id="AAK05706">
    <property type="protein sequence ID" value="AAK05706"/>
    <property type="gene ID" value="L0116"/>
</dbReference>
<dbReference type="KEGG" id="lla:L0116"/>
<dbReference type="PATRIC" id="fig|272623.7.peg.1729"/>
<dbReference type="eggNOG" id="COG0014">
    <property type="taxonomic scope" value="Bacteria"/>
</dbReference>
<dbReference type="HOGENOM" id="CLU_030231_0_0_9"/>
<dbReference type="OrthoDB" id="9809970at2"/>
<dbReference type="UniPathway" id="UPA00098">
    <property type="reaction ID" value="UER00360"/>
</dbReference>
<dbReference type="Proteomes" id="UP000002196">
    <property type="component" value="Chromosome"/>
</dbReference>
<dbReference type="GO" id="GO:0005737">
    <property type="term" value="C:cytoplasm"/>
    <property type="evidence" value="ECO:0007669"/>
    <property type="project" value="UniProtKB-SubCell"/>
</dbReference>
<dbReference type="GO" id="GO:0004350">
    <property type="term" value="F:glutamate-5-semialdehyde dehydrogenase activity"/>
    <property type="evidence" value="ECO:0007669"/>
    <property type="project" value="UniProtKB-UniRule"/>
</dbReference>
<dbReference type="GO" id="GO:0050661">
    <property type="term" value="F:NADP binding"/>
    <property type="evidence" value="ECO:0007669"/>
    <property type="project" value="InterPro"/>
</dbReference>
<dbReference type="GO" id="GO:0055129">
    <property type="term" value="P:L-proline biosynthetic process"/>
    <property type="evidence" value="ECO:0007669"/>
    <property type="project" value="UniProtKB-UniRule"/>
</dbReference>
<dbReference type="CDD" id="cd07079">
    <property type="entry name" value="ALDH_F18-19_ProA-GPR"/>
    <property type="match status" value="1"/>
</dbReference>
<dbReference type="FunFam" id="3.40.309.10:FF:000006">
    <property type="entry name" value="Gamma-glutamyl phosphate reductase"/>
    <property type="match status" value="1"/>
</dbReference>
<dbReference type="Gene3D" id="3.40.605.10">
    <property type="entry name" value="Aldehyde Dehydrogenase, Chain A, domain 1"/>
    <property type="match status" value="1"/>
</dbReference>
<dbReference type="Gene3D" id="3.40.309.10">
    <property type="entry name" value="Aldehyde Dehydrogenase, Chain A, domain 2"/>
    <property type="match status" value="1"/>
</dbReference>
<dbReference type="HAMAP" id="MF_00412">
    <property type="entry name" value="ProA"/>
    <property type="match status" value="1"/>
</dbReference>
<dbReference type="InterPro" id="IPR016161">
    <property type="entry name" value="Ald_DH/histidinol_DH"/>
</dbReference>
<dbReference type="InterPro" id="IPR016163">
    <property type="entry name" value="Ald_DH_C"/>
</dbReference>
<dbReference type="InterPro" id="IPR016162">
    <property type="entry name" value="Ald_DH_N"/>
</dbReference>
<dbReference type="InterPro" id="IPR015590">
    <property type="entry name" value="Aldehyde_DH_dom"/>
</dbReference>
<dbReference type="InterPro" id="IPR020593">
    <property type="entry name" value="G-glutamylP_reductase_CS"/>
</dbReference>
<dbReference type="InterPro" id="IPR012134">
    <property type="entry name" value="Glu-5-SA_DH"/>
</dbReference>
<dbReference type="InterPro" id="IPR000965">
    <property type="entry name" value="GPR_dom"/>
</dbReference>
<dbReference type="NCBIfam" id="NF001221">
    <property type="entry name" value="PRK00197.1"/>
    <property type="match status" value="1"/>
</dbReference>
<dbReference type="NCBIfam" id="TIGR00407">
    <property type="entry name" value="proA"/>
    <property type="match status" value="1"/>
</dbReference>
<dbReference type="PANTHER" id="PTHR11063:SF8">
    <property type="entry name" value="DELTA-1-PYRROLINE-5-CARBOXYLATE SYNTHASE"/>
    <property type="match status" value="1"/>
</dbReference>
<dbReference type="PANTHER" id="PTHR11063">
    <property type="entry name" value="GLUTAMATE SEMIALDEHYDE DEHYDROGENASE"/>
    <property type="match status" value="1"/>
</dbReference>
<dbReference type="Pfam" id="PF00171">
    <property type="entry name" value="Aldedh"/>
    <property type="match status" value="2"/>
</dbReference>
<dbReference type="PIRSF" id="PIRSF000151">
    <property type="entry name" value="GPR"/>
    <property type="match status" value="1"/>
</dbReference>
<dbReference type="SUPFAM" id="SSF53720">
    <property type="entry name" value="ALDH-like"/>
    <property type="match status" value="1"/>
</dbReference>
<dbReference type="PROSITE" id="PS01223">
    <property type="entry name" value="PROA"/>
    <property type="match status" value="1"/>
</dbReference>
<protein>
    <recommendedName>
        <fullName evidence="1">Gamma-glutamyl phosphate reductase</fullName>
        <shortName evidence="1">GPR</shortName>
        <ecNumber evidence="1">1.2.1.41</ecNumber>
    </recommendedName>
    <alternativeName>
        <fullName evidence="1">Glutamate-5-semialdehyde dehydrogenase</fullName>
    </alternativeName>
    <alternativeName>
        <fullName evidence="1">Glutamyl-gamma-semialdehyde dehydrogenase</fullName>
        <shortName evidence="1">GSA dehydrogenase</shortName>
    </alternativeName>
</protein>
<sequence>MIEELGLKVKKASKEVAKLSTADKNVFLQNLADSLIENTDRIISENEKDLANALEHGISEIMDDRLRLNAQRISDMATGLRQVAELPDPIRQVLQGFTNLDGLKILQKRVPLGTVGMIFESRPNVTIDAFSLCFKTGNSVLLRGGSDAIYSNMVLVEIIKENLLSAKITDGAVELLSDTSHAEAEKMMQADKFLDVLIPRGSARLINRVKEKATVPVIETGVGNCTIFVDESADLEMATKIVINAKTQRPSVCNAAESLVVHAKIADEFLPKLENEINKVHEIEFRADERALKVLSAGIPATDDDFGTEFLDYILSVKTVDNLDEAIEHINTYSSRHSESIVTHDYFNAQKFQDEIDAAAVYVNASTRFTDGFVFGLGAEIGISTQKLHARGPMGLEALTSTKYLIDGTGQIR</sequence>
<organism>
    <name type="scientific">Lactococcus lactis subsp. lactis (strain IL1403)</name>
    <name type="common">Streptococcus lactis</name>
    <dbReference type="NCBI Taxonomy" id="272623"/>
    <lineage>
        <taxon>Bacteria</taxon>
        <taxon>Bacillati</taxon>
        <taxon>Bacillota</taxon>
        <taxon>Bacilli</taxon>
        <taxon>Lactobacillales</taxon>
        <taxon>Streptococcaceae</taxon>
        <taxon>Lactococcus</taxon>
    </lineage>
</organism>
<gene>
    <name evidence="1" type="primary">proA</name>
    <name type="ordered locus">LL1608</name>
    <name type="ORF">L0116</name>
</gene>
<name>PROA_LACLA</name>
<comment type="function">
    <text evidence="1">Catalyzes the NADPH-dependent reduction of L-glutamate 5-phosphate into L-glutamate 5-semialdehyde and phosphate. The product spontaneously undergoes cyclization to form 1-pyrroline-5-carboxylate.</text>
</comment>
<comment type="catalytic activity">
    <reaction evidence="1">
        <text>L-glutamate 5-semialdehyde + phosphate + NADP(+) = L-glutamyl 5-phosphate + NADPH + H(+)</text>
        <dbReference type="Rhea" id="RHEA:19541"/>
        <dbReference type="ChEBI" id="CHEBI:15378"/>
        <dbReference type="ChEBI" id="CHEBI:43474"/>
        <dbReference type="ChEBI" id="CHEBI:57783"/>
        <dbReference type="ChEBI" id="CHEBI:58066"/>
        <dbReference type="ChEBI" id="CHEBI:58274"/>
        <dbReference type="ChEBI" id="CHEBI:58349"/>
        <dbReference type="EC" id="1.2.1.41"/>
    </reaction>
</comment>
<comment type="pathway">
    <text evidence="1">Amino-acid biosynthesis; L-proline biosynthesis; L-glutamate 5-semialdehyde from L-glutamate: step 2/2.</text>
</comment>
<comment type="subcellular location">
    <subcellularLocation>
        <location evidence="1">Cytoplasm</location>
    </subcellularLocation>
</comment>
<comment type="similarity">
    <text evidence="1">Belongs to the gamma-glutamyl phosphate reductase family.</text>
</comment>
<feature type="chain" id="PRO_0000189736" description="Gamma-glutamyl phosphate reductase">
    <location>
        <begin position="1"/>
        <end position="413"/>
    </location>
</feature>
<accession>Q9CF73</accession>
<proteinExistence type="inferred from homology"/>